<gene>
    <name evidence="1 2" type="primary">lysY</name>
    <name evidence="5" type="synonym">argC</name>
    <name type="ordered locus">Saci_0750</name>
</gene>
<keyword id="KW-0028">Amino-acid biosynthesis</keyword>
<keyword id="KW-0055">Arginine biosynthesis</keyword>
<keyword id="KW-0963">Cytoplasm</keyword>
<keyword id="KW-0457">Lysine biosynthesis</keyword>
<keyword id="KW-0521">NADP</keyword>
<keyword id="KW-0560">Oxidoreductase</keyword>
<keyword id="KW-1185">Reference proteome</keyword>
<dbReference type="EC" id="1.2.1.103" evidence="1 4"/>
<dbReference type="EC" id="1.2.1.106" evidence="1 4"/>
<dbReference type="EMBL" id="CP000077">
    <property type="protein sequence ID" value="AAY80126.1"/>
    <property type="molecule type" value="Genomic_DNA"/>
</dbReference>
<dbReference type="RefSeq" id="WP_011277628.1">
    <property type="nucleotide sequence ID" value="NC_007181.1"/>
</dbReference>
<dbReference type="SMR" id="Q4JAQ3"/>
<dbReference type="STRING" id="330779.Saci_0750"/>
<dbReference type="GeneID" id="14551268"/>
<dbReference type="GeneID" id="78441097"/>
<dbReference type="KEGG" id="sai:Saci_0750"/>
<dbReference type="PATRIC" id="fig|330779.12.peg.719"/>
<dbReference type="eggNOG" id="arCOG00495">
    <property type="taxonomic scope" value="Archaea"/>
</dbReference>
<dbReference type="HOGENOM" id="CLU_006384_0_1_2"/>
<dbReference type="BioCyc" id="MetaCyc:MONOMER-18313"/>
<dbReference type="BRENDA" id="1.2.1.106">
    <property type="organism ID" value="6160"/>
</dbReference>
<dbReference type="UniPathway" id="UPA00033">
    <property type="reaction ID" value="UER00037"/>
</dbReference>
<dbReference type="UniPathway" id="UPA00068"/>
<dbReference type="Proteomes" id="UP000001018">
    <property type="component" value="Chromosome"/>
</dbReference>
<dbReference type="GO" id="GO:0005737">
    <property type="term" value="C:cytoplasm"/>
    <property type="evidence" value="ECO:0007669"/>
    <property type="project" value="UniProtKB-SubCell"/>
</dbReference>
<dbReference type="GO" id="GO:0043870">
    <property type="term" value="F:N-acetyl-gamma-aminoadipyl-phosphate reductase activity"/>
    <property type="evidence" value="ECO:0007669"/>
    <property type="project" value="RHEA"/>
</dbReference>
<dbReference type="GO" id="GO:0003942">
    <property type="term" value="F:N-acetyl-gamma-glutamyl-phosphate reductase activity"/>
    <property type="evidence" value="ECO:0007669"/>
    <property type="project" value="InterPro"/>
</dbReference>
<dbReference type="GO" id="GO:0051287">
    <property type="term" value="F:NAD binding"/>
    <property type="evidence" value="ECO:0007669"/>
    <property type="project" value="InterPro"/>
</dbReference>
<dbReference type="GO" id="GO:0070401">
    <property type="term" value="F:NADP+ binding"/>
    <property type="evidence" value="ECO:0007669"/>
    <property type="project" value="InterPro"/>
</dbReference>
<dbReference type="GO" id="GO:0042450">
    <property type="term" value="P:arginine biosynthetic process via ornithine"/>
    <property type="evidence" value="ECO:0007669"/>
    <property type="project" value="UniProtKB-UniRule"/>
</dbReference>
<dbReference type="GO" id="GO:0006526">
    <property type="term" value="P:L-arginine biosynthetic process"/>
    <property type="evidence" value="ECO:0007669"/>
    <property type="project" value="UniProtKB-UniPathway"/>
</dbReference>
<dbReference type="GO" id="GO:0019878">
    <property type="term" value="P:lysine biosynthetic process via aminoadipic acid"/>
    <property type="evidence" value="ECO:0007669"/>
    <property type="project" value="UniProtKB-UniRule"/>
</dbReference>
<dbReference type="CDD" id="cd23939">
    <property type="entry name" value="AGPR_1_C_LysY"/>
    <property type="match status" value="1"/>
</dbReference>
<dbReference type="CDD" id="cd17895">
    <property type="entry name" value="AGPR_1_N"/>
    <property type="match status" value="1"/>
</dbReference>
<dbReference type="Gene3D" id="3.30.360.10">
    <property type="entry name" value="Dihydrodipicolinate Reductase, domain 2"/>
    <property type="match status" value="1"/>
</dbReference>
<dbReference type="Gene3D" id="3.40.50.720">
    <property type="entry name" value="NAD(P)-binding Rossmann-like Domain"/>
    <property type="match status" value="1"/>
</dbReference>
<dbReference type="HAMAP" id="MF_00150">
    <property type="entry name" value="ArgC_type1"/>
    <property type="match status" value="1"/>
</dbReference>
<dbReference type="HAMAP" id="MF_02083">
    <property type="entry name" value="LysY"/>
    <property type="match status" value="1"/>
</dbReference>
<dbReference type="InterPro" id="IPR023013">
    <property type="entry name" value="AGPR_AS"/>
</dbReference>
<dbReference type="InterPro" id="IPR000706">
    <property type="entry name" value="AGPR_type-1"/>
</dbReference>
<dbReference type="InterPro" id="IPR037535">
    <property type="entry name" value="LysY"/>
</dbReference>
<dbReference type="InterPro" id="IPR036291">
    <property type="entry name" value="NAD(P)-bd_dom_sf"/>
</dbReference>
<dbReference type="InterPro" id="IPR050085">
    <property type="entry name" value="NAGSA_dehydrogenase"/>
</dbReference>
<dbReference type="InterPro" id="IPR000534">
    <property type="entry name" value="Semialdehyde_DH_NAD-bd"/>
</dbReference>
<dbReference type="NCBIfam" id="TIGR01850">
    <property type="entry name" value="argC"/>
    <property type="match status" value="1"/>
</dbReference>
<dbReference type="PANTHER" id="PTHR32338:SF11">
    <property type="entry name" value="[LYSW]-L-2-AMINOADIPATE_[LYSW]-L-GLUTAMATE PHOSPHATE REDUCTASE-RELATED"/>
    <property type="match status" value="1"/>
</dbReference>
<dbReference type="PANTHER" id="PTHR32338">
    <property type="entry name" value="N-ACETYL-GAMMA-GLUTAMYL-PHOSPHATE REDUCTASE, CHLOROPLASTIC-RELATED-RELATED"/>
    <property type="match status" value="1"/>
</dbReference>
<dbReference type="Pfam" id="PF01118">
    <property type="entry name" value="Semialdhyde_dh"/>
    <property type="match status" value="1"/>
</dbReference>
<dbReference type="Pfam" id="PF22698">
    <property type="entry name" value="Semialdhyde_dhC_1"/>
    <property type="match status" value="1"/>
</dbReference>
<dbReference type="SMART" id="SM00859">
    <property type="entry name" value="Semialdhyde_dh"/>
    <property type="match status" value="1"/>
</dbReference>
<dbReference type="SUPFAM" id="SSF55347">
    <property type="entry name" value="Glyceraldehyde-3-phosphate dehydrogenase-like, C-terminal domain"/>
    <property type="match status" value="1"/>
</dbReference>
<dbReference type="SUPFAM" id="SSF51735">
    <property type="entry name" value="NAD(P)-binding Rossmann-fold domains"/>
    <property type="match status" value="1"/>
</dbReference>
<dbReference type="PROSITE" id="PS01224">
    <property type="entry name" value="ARGC"/>
    <property type="match status" value="1"/>
</dbReference>
<name>LYSY_SULAC</name>
<organism>
    <name type="scientific">Sulfolobus acidocaldarius (strain ATCC 33909 / DSM 639 / JCM 8929 / NBRC 15157 / NCIMB 11770)</name>
    <dbReference type="NCBI Taxonomy" id="330779"/>
    <lineage>
        <taxon>Archaea</taxon>
        <taxon>Thermoproteota</taxon>
        <taxon>Thermoprotei</taxon>
        <taxon>Sulfolobales</taxon>
        <taxon>Sulfolobaceae</taxon>
        <taxon>Sulfolobus</taxon>
    </lineage>
</organism>
<protein>
    <recommendedName>
        <fullName evidence="1 3">[LysW]-L-2-aminoadipate/[LysW]-L-glutamate phosphate reductase</fullName>
        <ecNumber evidence="1 4">1.2.1.103</ecNumber>
        <ecNumber evidence="1 4">1.2.1.106</ecNumber>
    </recommendedName>
</protein>
<feature type="chain" id="PRO_0000112497" description="[LysW]-L-2-aminoadipate/[LysW]-L-glutamate phosphate reductase">
    <location>
        <begin position="1"/>
        <end position="350"/>
    </location>
</feature>
<feature type="active site" evidence="1">
    <location>
        <position position="150"/>
    </location>
</feature>
<feature type="binding site" evidence="1">
    <location>
        <begin position="10"/>
        <end position="13"/>
    </location>
    <ligand>
        <name>NADP(+)</name>
        <dbReference type="ChEBI" id="CHEBI:58349"/>
    </ligand>
</feature>
<feature type="binding site" evidence="1">
    <location>
        <position position="317"/>
    </location>
    <ligand>
        <name>NADP(+)</name>
        <dbReference type="ChEBI" id="CHEBI:58349"/>
    </ligand>
</feature>
<sequence length="350" mass="39174">MIRVAVIGGSGYTGGELLRLLAMHNKVEVTYITSREYAGKPISIIHPNLRGFYNINFSQFSWDKIGEKAEAVFLALPHKVSVDYVPKLLEMGLQVVDLSADFRLKNPELYKLWYEFDHPYPDLLKKAVYGIPEIHYEELKGAKLIASPGCNSTATILAAAPLVYSNILDNYRLISDVKVGSSEGGAKPSEGSHHPERQNAIRPYEAEGHRHAAEVEQELQYISKKEVKISLVPHAVSTIRGALASVHGWLISDDLNEIEFWKKIIEFYRGRKFVRVIRGNIHPYPDPKYVIGSNFVDIGFAVEKRVGRITMFSAIDNLMKGAAGQAVQAFNVSRGFEEDEGLRIPPLRPA</sequence>
<proteinExistence type="evidence at protein level"/>
<reference key="1">
    <citation type="journal article" date="2005" name="J. Bacteriol.">
        <title>The genome of Sulfolobus acidocaldarius, a model organism of the Crenarchaeota.</title>
        <authorList>
            <person name="Chen L."/>
            <person name="Bruegger K."/>
            <person name="Skovgaard M."/>
            <person name="Redder P."/>
            <person name="She Q."/>
            <person name="Torarinsson E."/>
            <person name="Greve B."/>
            <person name="Awayez M."/>
            <person name="Zibat A."/>
            <person name="Klenk H.-P."/>
            <person name="Garrett R.A."/>
        </authorList>
    </citation>
    <scope>NUCLEOTIDE SEQUENCE [LARGE SCALE GENOMIC DNA]</scope>
    <source>
        <strain>ATCC 33909 / DSM 639 / JCM 8929 / NBRC 15157 / NCIMB 11770</strain>
    </source>
</reference>
<reference key="2">
    <citation type="journal article" date="2013" name="Nat. Chem. Biol.">
        <title>Lysine and arginine biosyntheses mediated by a common carrier protein in Sulfolobus.</title>
        <authorList>
            <person name="Ouchi T."/>
            <person name="Tomita T."/>
            <person name="Horie A."/>
            <person name="Yoshida A."/>
            <person name="Takahashi K."/>
            <person name="Nishida H."/>
            <person name="Lassak K."/>
            <person name="Taka H."/>
            <person name="Mineki R."/>
            <person name="Fujimura T."/>
            <person name="Kosono S."/>
            <person name="Nishiyama C."/>
            <person name="Masui R."/>
            <person name="Kuramitsu S."/>
            <person name="Albers S.V."/>
            <person name="Kuzuyama T."/>
            <person name="Nishiyama M."/>
        </authorList>
    </citation>
    <scope>FUNCTION</scope>
    <scope>CATALYTIC ACTIVITY</scope>
    <scope>PATHWAY</scope>
</reference>
<comment type="function">
    <text evidence="1 4">Involved in both the arginine and lysine biosynthetic pathways.</text>
</comment>
<comment type="catalytic activity">
    <reaction evidence="1 4">
        <text>[amino-group carrier protein]-C-terminal-N-(1-carboxy-5-oxopentan-1-yl)-L-glutamine + phosphate + NADP(+) = [amino-group carrier protein]-C-terminal-N-(1-carboxy-5-phosphooxy-5-oxopentan-1-yl)-L-glutamine + NADPH + H(+)</text>
        <dbReference type="Rhea" id="RHEA:41948"/>
        <dbReference type="Rhea" id="RHEA-COMP:9712"/>
        <dbReference type="Rhea" id="RHEA-COMP:9714"/>
        <dbReference type="ChEBI" id="CHEBI:15378"/>
        <dbReference type="ChEBI" id="CHEBI:43474"/>
        <dbReference type="ChEBI" id="CHEBI:57783"/>
        <dbReference type="ChEBI" id="CHEBI:58349"/>
        <dbReference type="ChEBI" id="CHEBI:78499"/>
        <dbReference type="ChEBI" id="CHEBI:78501"/>
        <dbReference type="EC" id="1.2.1.103"/>
    </reaction>
</comment>
<comment type="catalytic activity">
    <reaction evidence="1 4">
        <text>[amino-group carrier protein]-C-terminal-gamma-(L-glutamyl-5-semialdehyde)-L-glutamate + phosphate + NADP(+) = [amino-group carrier protein]-C-terminal-gamma-(5-phospho-L-glutamyl)-L-glutamate + NADPH + H(+)</text>
        <dbReference type="Rhea" id="RHEA:52668"/>
        <dbReference type="Rhea" id="RHEA-COMP:13313"/>
        <dbReference type="Rhea" id="RHEA-COMP:13327"/>
        <dbReference type="ChEBI" id="CHEBI:15378"/>
        <dbReference type="ChEBI" id="CHEBI:43474"/>
        <dbReference type="ChEBI" id="CHEBI:57783"/>
        <dbReference type="ChEBI" id="CHEBI:58349"/>
        <dbReference type="ChEBI" id="CHEBI:136717"/>
        <dbReference type="ChEBI" id="CHEBI:136761"/>
        <dbReference type="EC" id="1.2.1.106"/>
    </reaction>
</comment>
<comment type="pathway">
    <text evidence="1 4">Amino-acid biosynthesis; L-lysine biosynthesis via AAA pathway; L-lysine from L-alpha-aminoadipate (Thermus route): step 3/5.</text>
</comment>
<comment type="pathway">
    <text evidence="1 4">Amino-acid biosynthesis; L-arginine biosynthesis.</text>
</comment>
<comment type="subcellular location">
    <subcellularLocation>
        <location evidence="1">Cytoplasm</location>
    </subcellularLocation>
</comment>
<comment type="similarity">
    <text evidence="1 3">Belongs to the NAGSA dehydrogenase family. Type 1 subfamily. LysY sub-subfamily.</text>
</comment>
<evidence type="ECO:0000255" key="1">
    <source>
        <dbReference type="HAMAP-Rule" id="MF_02083"/>
    </source>
</evidence>
<evidence type="ECO:0000303" key="2">
    <source>
    </source>
</evidence>
<evidence type="ECO:0000305" key="3"/>
<evidence type="ECO:0000305" key="4">
    <source>
    </source>
</evidence>
<evidence type="ECO:0000312" key="5">
    <source>
        <dbReference type="EMBL" id="AAY80126.1"/>
    </source>
</evidence>
<accession>Q4JAQ3</accession>